<reference key="1">
    <citation type="journal article" date="2002" name="Nature">
        <title>Sequence and analysis of chromosome 2 of Dictyostelium discoideum.</title>
        <authorList>
            <person name="Gloeckner G."/>
            <person name="Eichinger L."/>
            <person name="Szafranski K."/>
            <person name="Pachebat J.A."/>
            <person name="Bankier A.T."/>
            <person name="Dear P.H."/>
            <person name="Lehmann R."/>
            <person name="Baumgart C."/>
            <person name="Parra G."/>
            <person name="Abril J.F."/>
            <person name="Guigo R."/>
            <person name="Kumpf K."/>
            <person name="Tunggal B."/>
            <person name="Cox E.C."/>
            <person name="Quail M.A."/>
            <person name="Platzer M."/>
            <person name="Rosenthal A."/>
            <person name="Noegel A.A."/>
        </authorList>
    </citation>
    <scope>NUCLEOTIDE SEQUENCE [LARGE SCALE GENOMIC DNA]</scope>
    <source>
        <strain>AX4</strain>
    </source>
</reference>
<reference key="2">
    <citation type="journal article" date="2005" name="Nature">
        <title>The genome of the social amoeba Dictyostelium discoideum.</title>
        <authorList>
            <person name="Eichinger L."/>
            <person name="Pachebat J.A."/>
            <person name="Gloeckner G."/>
            <person name="Rajandream M.A."/>
            <person name="Sucgang R."/>
            <person name="Berriman M."/>
            <person name="Song J."/>
            <person name="Olsen R."/>
            <person name="Szafranski K."/>
            <person name="Xu Q."/>
            <person name="Tunggal B."/>
            <person name="Kummerfeld S."/>
            <person name="Madera M."/>
            <person name="Konfortov B.A."/>
            <person name="Rivero F."/>
            <person name="Bankier A.T."/>
            <person name="Lehmann R."/>
            <person name="Hamlin N."/>
            <person name="Davies R."/>
            <person name="Gaudet P."/>
            <person name="Fey P."/>
            <person name="Pilcher K."/>
            <person name="Chen G."/>
            <person name="Saunders D."/>
            <person name="Sodergren E.J."/>
            <person name="Davis P."/>
            <person name="Kerhornou A."/>
            <person name="Nie X."/>
            <person name="Hall N."/>
            <person name="Anjard C."/>
            <person name="Hemphill L."/>
            <person name="Bason N."/>
            <person name="Farbrother P."/>
            <person name="Desany B."/>
            <person name="Just E."/>
            <person name="Morio T."/>
            <person name="Rost R."/>
            <person name="Churcher C.M."/>
            <person name="Cooper J."/>
            <person name="Haydock S."/>
            <person name="van Driessche N."/>
            <person name="Cronin A."/>
            <person name="Goodhead I."/>
            <person name="Muzny D.M."/>
            <person name="Mourier T."/>
            <person name="Pain A."/>
            <person name="Lu M."/>
            <person name="Harper D."/>
            <person name="Lindsay R."/>
            <person name="Hauser H."/>
            <person name="James K.D."/>
            <person name="Quiles M."/>
            <person name="Madan Babu M."/>
            <person name="Saito T."/>
            <person name="Buchrieser C."/>
            <person name="Wardroper A."/>
            <person name="Felder M."/>
            <person name="Thangavelu M."/>
            <person name="Johnson D."/>
            <person name="Knights A."/>
            <person name="Loulseged H."/>
            <person name="Mungall K.L."/>
            <person name="Oliver K."/>
            <person name="Price C."/>
            <person name="Quail M.A."/>
            <person name="Urushihara H."/>
            <person name="Hernandez J."/>
            <person name="Rabbinowitsch E."/>
            <person name="Steffen D."/>
            <person name="Sanders M."/>
            <person name="Ma J."/>
            <person name="Kohara Y."/>
            <person name="Sharp S."/>
            <person name="Simmonds M.N."/>
            <person name="Spiegler S."/>
            <person name="Tivey A."/>
            <person name="Sugano S."/>
            <person name="White B."/>
            <person name="Walker D."/>
            <person name="Woodward J.R."/>
            <person name="Winckler T."/>
            <person name="Tanaka Y."/>
            <person name="Shaulsky G."/>
            <person name="Schleicher M."/>
            <person name="Weinstock G.M."/>
            <person name="Rosenthal A."/>
            <person name="Cox E.C."/>
            <person name="Chisholm R.L."/>
            <person name="Gibbs R.A."/>
            <person name="Loomis W.F."/>
            <person name="Platzer M."/>
            <person name="Kay R.R."/>
            <person name="Williams J.G."/>
            <person name="Dear P.H."/>
            <person name="Noegel A.A."/>
            <person name="Barrell B.G."/>
            <person name="Kuspa A."/>
        </authorList>
    </citation>
    <scope>NUCLEOTIDE SEQUENCE [LARGE SCALE GENOMIC DNA]</scope>
    <source>
        <strain>AX4</strain>
    </source>
</reference>
<proteinExistence type="inferred from homology"/>
<accession>Q75JQ0</accession>
<accession>Q559M7</accession>
<sequence>MNTKFILILLVLIISTIFVNSQSLNVEVNDNTKDVQDWHDACKVITDEPMCLAFIQHCEWTKGHCKAWL</sequence>
<protein>
    <recommendedName>
        <fullName>Uncharacterized protein DDB_G0272238</fullName>
    </recommendedName>
</protein>
<evidence type="ECO:0000255" key="1"/>
<evidence type="ECO:0000305" key="2"/>
<comment type="subcellular location">
    <subcellularLocation>
        <location evidence="2">Secreted</location>
    </subcellularLocation>
</comment>
<name>Y2085_DICDI</name>
<organism>
    <name type="scientific">Dictyostelium discoideum</name>
    <name type="common">Social amoeba</name>
    <dbReference type="NCBI Taxonomy" id="44689"/>
    <lineage>
        <taxon>Eukaryota</taxon>
        <taxon>Amoebozoa</taxon>
        <taxon>Evosea</taxon>
        <taxon>Eumycetozoa</taxon>
        <taxon>Dictyostelia</taxon>
        <taxon>Dictyosteliales</taxon>
        <taxon>Dictyosteliaceae</taxon>
        <taxon>Dictyostelium</taxon>
    </lineage>
</organism>
<feature type="signal peptide" evidence="1">
    <location>
        <begin position="1"/>
        <end position="21"/>
    </location>
</feature>
<feature type="chain" id="PRO_0000348084" description="Uncharacterized protein DDB_G0272238">
    <location>
        <begin position="22"/>
        <end position="69"/>
    </location>
</feature>
<gene>
    <name type="ORF">DDB_G0272238</name>
</gene>
<keyword id="KW-1185">Reference proteome</keyword>
<keyword id="KW-0964">Secreted</keyword>
<keyword id="KW-0732">Signal</keyword>
<dbReference type="EMBL" id="AAFI02000008">
    <property type="protein sequence ID" value="EAL71271.1"/>
    <property type="molecule type" value="Genomic_DNA"/>
</dbReference>
<dbReference type="RefSeq" id="XP_645307.1">
    <property type="nucleotide sequence ID" value="XM_640215.1"/>
</dbReference>
<dbReference type="STRING" id="44689.Q75JQ0"/>
<dbReference type="PaxDb" id="44689-DDB0232085"/>
<dbReference type="EnsemblProtists" id="EAL71271">
    <property type="protein sequence ID" value="EAL71271"/>
    <property type="gene ID" value="DDB_G0272238"/>
</dbReference>
<dbReference type="GeneID" id="8618473"/>
<dbReference type="KEGG" id="ddi:DDB_G0272238"/>
<dbReference type="dictyBase" id="DDB_G0272238">
    <property type="gene designation" value="rigB"/>
</dbReference>
<dbReference type="VEuPathDB" id="AmoebaDB:DDB_G0272238"/>
<dbReference type="HOGENOM" id="CLU_2781198_0_0_1"/>
<dbReference type="InParanoid" id="Q75JQ0"/>
<dbReference type="PRO" id="PR:Q75JQ0"/>
<dbReference type="Proteomes" id="UP000002195">
    <property type="component" value="Chromosome 2"/>
</dbReference>
<dbReference type="GO" id="GO:0005576">
    <property type="term" value="C:extracellular region"/>
    <property type="evidence" value="ECO:0007669"/>
    <property type="project" value="UniProtKB-SubCell"/>
</dbReference>